<accession>A3KFU9</accession>
<accession>Q0EEE3</accession>
<accession>Q69ZL6</accession>
<accession>Q6GQX3</accession>
<accession>Q6NS63</accession>
<comment type="function">
    <text evidence="1 2">Plays a role in neuronal proliferation and differentiation. Plays a role in the accumulation of cellular cholesterol. Involved in intracellular lipid droplet formation. May contribute to cholesterol homeostasis in neuronal cells.</text>
</comment>
<comment type="subcellular location">
    <subcellularLocation>
        <location evidence="2">Endoplasmic reticulum membrane</location>
        <topology evidence="9">Multi-pass membrane protein</topology>
    </subcellularLocation>
    <subcellularLocation>
        <location evidence="2">Nucleus membrane</location>
        <topology evidence="9">Multi-pass membrane protein</topology>
    </subcellularLocation>
    <subcellularLocation>
        <location evidence="1">Cytoplasmic vesicle membrane</location>
        <topology evidence="9">Multi-pass membrane protein</topology>
    </subcellularLocation>
    <text evidence="1 2">Predominantly localized to cholesterol-enriched domains within the membrane (By similarity). Localizes to cytoplasmic punctate vesicular structures (By similarity).</text>
</comment>
<comment type="alternative products">
    <event type="alternative splicing"/>
    <isoform>
        <id>A3KFU9-1</id>
        <name>1</name>
        <sequence type="displayed"/>
    </isoform>
    <isoform>
        <id>A3KFU9-2</id>
        <name>2</name>
        <sequence type="described" ref="VSP_028968 VSP_028969"/>
    </isoform>
    <isoform>
        <id>A3KFU9-3</id>
        <name>3</name>
        <sequence type="described" ref="VSP_028967"/>
    </isoform>
</comment>
<comment type="tissue specificity">
    <text evidence="6">Expressed in brain, retina, testis and thymus (PubMed:19179482).</text>
</comment>
<comment type="induction">
    <text evidence="6">Down-regulated by thyroid hormone T3 (PubMed:19179482).</text>
</comment>
<comment type="domain">
    <text evidence="1">The SSD (sterol-sensing) domain is necessary for the increase in cellular cholesterol uptake.</text>
</comment>
<comment type="similarity">
    <text evidence="9">Belongs to the patched family.</text>
</comment>
<evidence type="ECO:0000250" key="1">
    <source>
        <dbReference type="UniProtKB" id="B9U3F2"/>
    </source>
</evidence>
<evidence type="ECO:0000250" key="2">
    <source>
        <dbReference type="UniProtKB" id="Q9P2K9"/>
    </source>
</evidence>
<evidence type="ECO:0000255" key="3"/>
<evidence type="ECO:0000255" key="4">
    <source>
        <dbReference type="PROSITE-ProRule" id="PRU00199"/>
    </source>
</evidence>
<evidence type="ECO:0000256" key="5">
    <source>
        <dbReference type="SAM" id="MobiDB-lite"/>
    </source>
</evidence>
<evidence type="ECO:0000269" key="6">
    <source>
    </source>
</evidence>
<evidence type="ECO:0000303" key="7">
    <source>
    </source>
</evidence>
<evidence type="ECO:0000303" key="8">
    <source ref="1"/>
</evidence>
<evidence type="ECO:0000305" key="9"/>
<evidence type="ECO:0000312" key="10">
    <source>
        <dbReference type="MGI" id="MGI:2444403"/>
    </source>
</evidence>
<reference key="1">
    <citation type="submission" date="2005-09" db="EMBL/GenBank/DDBJ databases">
        <title>Identification of the novel RND-type protein in mice.</title>
        <authorList>
            <person name="Hashimoto S."/>
            <person name="Yamaguchi A."/>
        </authorList>
    </citation>
    <scope>NUCLEOTIDE SEQUENCE [MRNA] (ISOFORM 1)</scope>
    <source>
        <tissue>Brain</tissue>
    </source>
</reference>
<reference key="2">
    <citation type="journal article" date="2009" name="PLoS Biol.">
        <title>Lineage-specific biology revealed by a finished genome assembly of the mouse.</title>
        <authorList>
            <person name="Church D.M."/>
            <person name="Goodstadt L."/>
            <person name="Hillier L.W."/>
            <person name="Zody M.C."/>
            <person name="Goldstein S."/>
            <person name="She X."/>
            <person name="Bult C.J."/>
            <person name="Agarwala R."/>
            <person name="Cherry J.L."/>
            <person name="DiCuccio M."/>
            <person name="Hlavina W."/>
            <person name="Kapustin Y."/>
            <person name="Meric P."/>
            <person name="Maglott D."/>
            <person name="Birtle Z."/>
            <person name="Marques A.C."/>
            <person name="Graves T."/>
            <person name="Zhou S."/>
            <person name="Teague B."/>
            <person name="Potamousis K."/>
            <person name="Churas C."/>
            <person name="Place M."/>
            <person name="Herschleb J."/>
            <person name="Runnheim R."/>
            <person name="Forrest D."/>
            <person name="Amos-Landgraf J."/>
            <person name="Schwartz D.C."/>
            <person name="Cheng Z."/>
            <person name="Lindblad-Toh K."/>
            <person name="Eichler E.E."/>
            <person name="Ponting C.P."/>
        </authorList>
    </citation>
    <scope>NUCLEOTIDE SEQUENCE [LARGE SCALE GENOMIC DNA]</scope>
    <source>
        <strain>C57BL/6J</strain>
    </source>
</reference>
<reference key="3">
    <citation type="journal article" date="2004" name="Genome Res.">
        <title>The status, quality, and expansion of the NIH full-length cDNA project: the Mammalian Gene Collection (MGC).</title>
        <authorList>
            <consortium name="The MGC Project Team"/>
        </authorList>
    </citation>
    <scope>NUCLEOTIDE SEQUENCE [LARGE SCALE MRNA] (ISOFORMS 2 AND 3)</scope>
    <source>
        <strain>C57BL/6J</strain>
        <tissue>Brain</tissue>
        <tissue>Fetal brain</tissue>
    </source>
</reference>
<reference key="4">
    <citation type="journal article" date="2004" name="DNA Res.">
        <title>Prediction of the coding sequences of mouse homologues of KIAA gene: IV. The complete nucleotide sequences of 500 mouse KIAA-homologous cDNAs identified by screening of terminal sequences of cDNA clones randomly sampled from size-fractionated libraries.</title>
        <authorList>
            <person name="Okazaki N."/>
            <person name="Kikuno R."/>
            <person name="Ohara R."/>
            <person name="Inamoto S."/>
            <person name="Koseki H."/>
            <person name="Hiraoka S."/>
            <person name="Saga Y."/>
            <person name="Seino S."/>
            <person name="Nishimura M."/>
            <person name="Kaisho T."/>
            <person name="Hoshino K."/>
            <person name="Kitamura H."/>
            <person name="Nagase T."/>
            <person name="Ohara O."/>
            <person name="Koga H."/>
        </authorList>
    </citation>
    <scope>NUCLEOTIDE SEQUENCE [LARGE SCALE MRNA] OF 105-1347 (ISOFORM 1)</scope>
    <source>
        <tissue>Fetal brain</tissue>
    </source>
</reference>
<reference key="5">
    <citation type="journal article" date="2009" name="Mol. Endocrinol.">
        <title>DISP3, a sterol-sensing domain-containing protein that links thyroid hormone action and cholesterol metabolism.</title>
        <authorList>
            <person name="Zikova M."/>
            <person name="Corlett A."/>
            <person name="Bendova Z."/>
            <person name="Pajer P."/>
            <person name="Bartunek P."/>
        </authorList>
    </citation>
    <scope>TISSUE SPECIFICITY</scope>
    <scope>INDUCTION</scope>
</reference>
<sequence length="1347" mass="148446">MDSEDDPLLQDVWLEEEQPEDEACRGIPGPGLQSGAQGCWRRWTLPSRPPTLGFWSTLGWAFTNPCCAGLVLFLGCSIPMVLSAFMFLYYPPLDIDISYNAFEIRNHEASQRFDALALALKSQFGSWGRNRRDLADFTSETLQRLISEQLQQLHLGNHSRPASRAPRSAPRDTVATQTSAANSSERRRREAPSPEGQVTNQSRARRGASRWDYSRTYVSANTQTHAHWRIELIFLARGDAERNIFTSERLVTIHEIERKIMDHPGFREFCWKPHEVLKDLPLGSYSYCSPPSSLMTYFFPTERGGKIYYDGMGQDLADIRGSLELAMTHPEFYWYVDEGLSVDNLKSSLLRSEILFGAPLPNYYSVDDRWEEQRAKFQSFVVTYVAMLAKQSTSKVQVLYGGTDLFDYEVRRTFNNDMLLAFISSSCIAALVYILTSCSVFLSFFGIASIGLSCLVALFLYHVVFGIQYLGILNGVAAFVIVGIGVDDVFVFINTYRQATHLEDPQLRMIHTIQTAGKATFFTSLTTAAAYAANVFSQIPAVHDFGLFMSLIVTCCWLAVLFTMPAALGLWSLYMAPLESSCQNSCHQKCGRKSSLHFPGDLFTAPERAGGGPAQGPLPYLDDDIPLLNVEDEPASLELGDVSLVSVHCEGLQPTPDANSRGQLLAQLQELLHHWVLWAAVKSRWVIVGLFASILILSLVFASRLRPASRAPLLFRPDTNIQVLLDLKYNLSAEGISCITCSGLFQEKPHSLQNNVRTSLEKKKRGSGVSWASRTETTAQESMSTVYISKVKSKGHPAVYRLSLNASLPAPWQAVSPGDGEVPSFQVYRAPFGDFTKKLTACMSTVGLLQAASPSRKWMVTALACDARRGWKFDFSFYVATKEQQHTRKLYFAQSHKPPFHGRLCVAPPGCLLSSSPDGPTKGFFYVPSDKVPKARISATFGFNPCVNTGCGKPAVRPLVDTGAMVFVVFGIIGLNRTQQMDNHVIGDPGSVIYDSSFDLFKEIGHLCRLCKAIAGNSELVKPGGAQCLPSGYSISSFLQMLHPECKELPEPNLLPGQLSHGAVGVKEGRVQWISMAFESTTYKGKSSFQTYSDYLRWESFLRQQLQTFPEGSALHRGFQTCEHWKQIFMEIIGVQSALYGLVLSLLICVAAVAVFTTHVLLLLPVLLSILGIVCLVVTIMYWSGWEMGAVEAISLSILVGSSVDYCVHLVEGYLLAGENLPPQLSQDPSSQRQWRTLEAVRHVGVAIVSSALTTVIATVPLFFCIIAPFAKFGKIVALNTGVSILYTLTVSTALLGIMAPGSFTRTRTSFLKALGAVLLAGALGLGACLVLLRSGYKIPLPSGATL</sequence>
<proteinExistence type="evidence at transcript level"/>
<organism>
    <name type="scientific">Mus musculus</name>
    <name type="common">Mouse</name>
    <dbReference type="NCBI Taxonomy" id="10090"/>
    <lineage>
        <taxon>Eukaryota</taxon>
        <taxon>Metazoa</taxon>
        <taxon>Chordata</taxon>
        <taxon>Craniata</taxon>
        <taxon>Vertebrata</taxon>
        <taxon>Euteleostomi</taxon>
        <taxon>Mammalia</taxon>
        <taxon>Eutheria</taxon>
        <taxon>Euarchontoglires</taxon>
        <taxon>Glires</taxon>
        <taxon>Rodentia</taxon>
        <taxon>Myomorpha</taxon>
        <taxon>Muroidea</taxon>
        <taxon>Muridae</taxon>
        <taxon>Murinae</taxon>
        <taxon>Mus</taxon>
        <taxon>Mus</taxon>
    </lineage>
</organism>
<dbReference type="EMBL" id="AB235901">
    <property type="protein sequence ID" value="BAF32145.1"/>
    <property type="molecule type" value="mRNA"/>
</dbReference>
<dbReference type="EMBL" id="AL606919">
    <property type="status" value="NOT_ANNOTATED_CDS"/>
    <property type="molecule type" value="Genomic_DNA"/>
</dbReference>
<dbReference type="EMBL" id="AL645605">
    <property type="status" value="NOT_ANNOTATED_CDS"/>
    <property type="molecule type" value="Genomic_DNA"/>
</dbReference>
<dbReference type="EMBL" id="BC070441">
    <property type="protein sequence ID" value="AAH70441.1"/>
    <property type="molecule type" value="mRNA"/>
</dbReference>
<dbReference type="EMBL" id="BC072569">
    <property type="protein sequence ID" value="AAH72569.1"/>
    <property type="molecule type" value="mRNA"/>
</dbReference>
<dbReference type="EMBL" id="AK173152">
    <property type="protein sequence ID" value="BAD32430.1"/>
    <property type="molecule type" value="mRNA"/>
</dbReference>
<dbReference type="CCDS" id="CCDS38966.1">
    <molecule id="A3KFU9-1"/>
</dbReference>
<dbReference type="RefSeq" id="XP_011248557.1">
    <property type="nucleotide sequence ID" value="XM_011250255.2"/>
</dbReference>
<dbReference type="FunCoup" id="A3KFU9">
    <property type="interactions" value="388"/>
</dbReference>
<dbReference type="STRING" id="10090.ENSMUSP00000038490"/>
<dbReference type="GlyCosmos" id="A3KFU9">
    <property type="glycosylation" value="2 sites, No reported glycans"/>
</dbReference>
<dbReference type="GlyGen" id="A3KFU9">
    <property type="glycosylation" value="7 sites, 3 N-linked glycans (4 sites)"/>
</dbReference>
<dbReference type="PhosphoSitePlus" id="A3KFU9"/>
<dbReference type="PaxDb" id="10090-ENSMUSP00000038490"/>
<dbReference type="ProteomicsDB" id="277454">
    <molecule id="A3KFU9-1"/>
</dbReference>
<dbReference type="ProteomicsDB" id="277455">
    <molecule id="A3KFU9-2"/>
</dbReference>
<dbReference type="ProteomicsDB" id="277456">
    <molecule id="A3KFU9-3"/>
</dbReference>
<dbReference type="AGR" id="MGI:2444403"/>
<dbReference type="MGI" id="MGI:2444403">
    <property type="gene designation" value="Disp3"/>
</dbReference>
<dbReference type="eggNOG" id="KOG3664">
    <property type="taxonomic scope" value="Eukaryota"/>
</dbReference>
<dbReference type="InParanoid" id="A3KFU9"/>
<dbReference type="PhylomeDB" id="A3KFU9"/>
<dbReference type="BioGRID-ORCS" id="242748">
    <property type="hits" value="3 hits in 78 CRISPR screens"/>
</dbReference>
<dbReference type="PRO" id="PR:A3KFU9"/>
<dbReference type="Proteomes" id="UP000000589">
    <property type="component" value="Unplaced"/>
</dbReference>
<dbReference type="RNAct" id="A3KFU9">
    <property type="molecule type" value="protein"/>
</dbReference>
<dbReference type="GO" id="GO:0005737">
    <property type="term" value="C:cytoplasm"/>
    <property type="evidence" value="ECO:0000250"/>
    <property type="project" value="UniProtKB"/>
</dbReference>
<dbReference type="GO" id="GO:0030659">
    <property type="term" value="C:cytoplasmic vesicle membrane"/>
    <property type="evidence" value="ECO:0007669"/>
    <property type="project" value="UniProtKB-SubCell"/>
</dbReference>
<dbReference type="GO" id="GO:0005789">
    <property type="term" value="C:endoplasmic reticulum membrane"/>
    <property type="evidence" value="ECO:0007669"/>
    <property type="project" value="UniProtKB-SubCell"/>
</dbReference>
<dbReference type="GO" id="GO:0031965">
    <property type="term" value="C:nuclear membrane"/>
    <property type="evidence" value="ECO:0007669"/>
    <property type="project" value="UniProtKB-SubCell"/>
</dbReference>
<dbReference type="GO" id="GO:0030154">
    <property type="term" value="P:cell differentiation"/>
    <property type="evidence" value="ECO:0007669"/>
    <property type="project" value="UniProtKB-KW"/>
</dbReference>
<dbReference type="GO" id="GO:0008203">
    <property type="term" value="P:cholesterol metabolic process"/>
    <property type="evidence" value="ECO:0007669"/>
    <property type="project" value="UniProtKB-KW"/>
</dbReference>
<dbReference type="GO" id="GO:0045665">
    <property type="term" value="P:negative regulation of neuron differentiation"/>
    <property type="evidence" value="ECO:0000250"/>
    <property type="project" value="UniProtKB"/>
</dbReference>
<dbReference type="GO" id="GO:0045834">
    <property type="term" value="P:positive regulation of lipid metabolic process"/>
    <property type="evidence" value="ECO:0000250"/>
    <property type="project" value="UniProtKB"/>
</dbReference>
<dbReference type="GO" id="GO:2000179">
    <property type="term" value="P:positive regulation of neural precursor cell proliferation"/>
    <property type="evidence" value="ECO:0000250"/>
    <property type="project" value="UniProtKB"/>
</dbReference>
<dbReference type="FunFam" id="1.20.1640.10:FF:000015">
    <property type="entry name" value="Dispatched RND transporter family member 3"/>
    <property type="match status" value="1"/>
</dbReference>
<dbReference type="FunFam" id="1.20.1640.10:FF:000022">
    <property type="entry name" value="Dispatched RND transporter family member 3"/>
    <property type="match status" value="1"/>
</dbReference>
<dbReference type="Gene3D" id="1.20.1640.10">
    <property type="entry name" value="Multidrug efflux transporter AcrB transmembrane domain"/>
    <property type="match status" value="2"/>
</dbReference>
<dbReference type="InterPro" id="IPR042480">
    <property type="entry name" value="DISP3"/>
</dbReference>
<dbReference type="InterPro" id="IPR053954">
    <property type="entry name" value="DUF7023"/>
</dbReference>
<dbReference type="InterPro" id="IPR053958">
    <property type="entry name" value="HMGCR/SNAP/NPC1-like_SSD"/>
</dbReference>
<dbReference type="InterPro" id="IPR000731">
    <property type="entry name" value="SSD"/>
</dbReference>
<dbReference type="PANTHER" id="PTHR46687">
    <property type="entry name" value="PROTEIN DISPATCHED HOMOLOG 3"/>
    <property type="match status" value="1"/>
</dbReference>
<dbReference type="PANTHER" id="PTHR46687:SF1">
    <property type="entry name" value="PROTEIN DISPATCHED HOMOLOG 3"/>
    <property type="match status" value="1"/>
</dbReference>
<dbReference type="Pfam" id="PF22894">
    <property type="entry name" value="DUF7023"/>
    <property type="match status" value="1"/>
</dbReference>
<dbReference type="Pfam" id="PF12349">
    <property type="entry name" value="Sterol-sensing"/>
    <property type="match status" value="1"/>
</dbReference>
<dbReference type="SUPFAM" id="SSF82866">
    <property type="entry name" value="Multidrug efflux transporter AcrB transmembrane domain"/>
    <property type="match status" value="2"/>
</dbReference>
<dbReference type="PROSITE" id="PS50156">
    <property type="entry name" value="SSD"/>
    <property type="match status" value="1"/>
</dbReference>
<protein>
    <recommendedName>
        <fullName evidence="2">Protein dispatched homolog 3</fullName>
    </recommendedName>
    <alternativeName>
        <fullName evidence="9">Patched domain-containing protein 2</fullName>
    </alternativeName>
    <alternativeName>
        <fullName evidence="8">RND-type protein RNDEu-2</fullName>
    </alternativeName>
</protein>
<keyword id="KW-0025">Alternative splicing</keyword>
<keyword id="KW-0153">Cholesterol metabolism</keyword>
<keyword id="KW-0968">Cytoplasmic vesicle</keyword>
<keyword id="KW-0221">Differentiation</keyword>
<keyword id="KW-0256">Endoplasmic reticulum</keyword>
<keyword id="KW-0325">Glycoprotein</keyword>
<keyword id="KW-0443">Lipid metabolism</keyword>
<keyword id="KW-0472">Membrane</keyword>
<keyword id="KW-0539">Nucleus</keyword>
<keyword id="KW-1185">Reference proteome</keyword>
<keyword id="KW-0753">Steroid metabolism</keyword>
<keyword id="KW-1207">Sterol metabolism</keyword>
<keyword id="KW-0812">Transmembrane</keyword>
<keyword id="KW-1133">Transmembrane helix</keyword>
<feature type="chain" id="PRO_0000308330" description="Protein dispatched homolog 3">
    <location>
        <begin position="1"/>
        <end position="1347"/>
    </location>
</feature>
<feature type="topological domain" description="Cytoplasmic" evidence="3">
    <location>
        <begin position="1"/>
        <end position="67"/>
    </location>
</feature>
<feature type="transmembrane region" description="Helical" evidence="3">
    <location>
        <begin position="68"/>
        <end position="88"/>
    </location>
</feature>
<feature type="topological domain" description="Lumenal" evidence="3">
    <location>
        <begin position="89"/>
        <end position="417"/>
    </location>
</feature>
<feature type="transmembrane region" description="Helical" evidence="3">
    <location>
        <begin position="418"/>
        <end position="438"/>
    </location>
</feature>
<feature type="topological domain" description="Cytoplasmic" evidence="3">
    <location>
        <position position="439"/>
    </location>
</feature>
<feature type="transmembrane region" description="Helical" evidence="3">
    <location>
        <begin position="440"/>
        <end position="460"/>
    </location>
</feature>
<feature type="topological domain" description="Lumenal" evidence="3">
    <location>
        <begin position="461"/>
        <end position="463"/>
    </location>
</feature>
<feature type="transmembrane region" description="Helical" evidence="3">
    <location>
        <begin position="464"/>
        <end position="484"/>
    </location>
</feature>
<feature type="topological domain" description="Cytoplasmic" evidence="3">
    <location>
        <begin position="485"/>
        <end position="528"/>
    </location>
</feature>
<feature type="transmembrane region" description="Helical" evidence="3">
    <location>
        <begin position="529"/>
        <end position="549"/>
    </location>
</feature>
<feature type="topological domain" description="Lumenal" evidence="3">
    <location>
        <position position="550"/>
    </location>
</feature>
<feature type="transmembrane region" description="Helical" evidence="3">
    <location>
        <begin position="551"/>
        <end position="571"/>
    </location>
</feature>
<feature type="topological domain" description="Cytoplasmic" evidence="3">
    <location>
        <begin position="572"/>
        <end position="684"/>
    </location>
</feature>
<feature type="transmembrane region" description="Helical" evidence="3">
    <location>
        <begin position="685"/>
        <end position="705"/>
    </location>
</feature>
<feature type="topological domain" description="Lumenal" evidence="3">
    <location>
        <begin position="706"/>
        <end position="1137"/>
    </location>
</feature>
<feature type="transmembrane region" description="Helical" evidence="3">
    <location>
        <begin position="1138"/>
        <end position="1158"/>
    </location>
</feature>
<feature type="topological domain" description="Cytoplasmic" evidence="3">
    <location>
        <position position="1159"/>
    </location>
</feature>
<feature type="transmembrane region" description="Helical" evidence="3">
    <location>
        <begin position="1160"/>
        <end position="1180"/>
    </location>
</feature>
<feature type="topological domain" description="Lumenal" evidence="3">
    <location>
        <begin position="1181"/>
        <end position="1246"/>
    </location>
</feature>
<feature type="transmembrane region" description="Helical" evidence="3">
    <location>
        <begin position="1247"/>
        <end position="1267"/>
    </location>
</feature>
<feature type="topological domain" description="Cytoplasmic" evidence="3">
    <location>
        <begin position="1268"/>
        <end position="1281"/>
    </location>
</feature>
<feature type="transmembrane region" description="Helical" evidence="3">
    <location>
        <begin position="1282"/>
        <end position="1302"/>
    </location>
</feature>
<feature type="topological domain" description="Lumenal" evidence="3">
    <location>
        <begin position="1303"/>
        <end position="1310"/>
    </location>
</feature>
<feature type="transmembrane region" description="Helical" evidence="3">
    <location>
        <begin position="1311"/>
        <end position="1331"/>
    </location>
</feature>
<feature type="topological domain" description="Cytoplasmic" evidence="3">
    <location>
        <begin position="1332"/>
        <end position="1347"/>
    </location>
</feature>
<feature type="domain" description="SSD" evidence="4">
    <location>
        <begin position="412"/>
        <end position="570"/>
    </location>
</feature>
<feature type="region of interest" description="Disordered" evidence="5">
    <location>
        <begin position="156"/>
        <end position="207"/>
    </location>
</feature>
<feature type="compositionally biased region" description="Low complexity" evidence="5">
    <location>
        <begin position="159"/>
        <end position="168"/>
    </location>
</feature>
<feature type="glycosylation site" description="N-linked (GlcNAc...) asparagine" evidence="3">
    <location>
        <position position="157"/>
    </location>
</feature>
<feature type="glycosylation site" description="N-linked (GlcNAc...) asparagine" evidence="3">
    <location>
        <position position="976"/>
    </location>
</feature>
<feature type="splice variant" id="VSP_028967" description="In isoform 3." evidence="7">
    <location>
        <begin position="827"/>
        <end position="1347"/>
    </location>
</feature>
<feature type="splice variant" id="VSP_028968" description="In isoform 2." evidence="7">
    <original>VYRAPFGDFTKKL</original>
    <variation>GCFRRRAPPASGW</variation>
    <location>
        <begin position="827"/>
        <end position="839"/>
    </location>
</feature>
<feature type="splice variant" id="VSP_028969" description="In isoform 2." evidence="7">
    <location>
        <begin position="840"/>
        <end position="1347"/>
    </location>
</feature>
<feature type="sequence conflict" description="In Ref. 1; BAF32145." evidence="9" ref="1">
    <original>I</original>
    <variation>V</variation>
    <location>
        <position position="27"/>
    </location>
</feature>
<feature type="sequence conflict" description="In Ref. 1; BAF32145 and 4; BAD32430." evidence="9" ref="1 4">
    <original>S</original>
    <variation>P</variation>
    <location>
        <position position="193"/>
    </location>
</feature>
<feature type="sequence conflict" description="In Ref. 1; BAF32145 and 4; BAD32430." evidence="9" ref="1 4">
    <original>T</original>
    <variation>P</variation>
    <location>
        <position position="775"/>
    </location>
</feature>
<feature type="sequence conflict" description="In Ref. 4; BAD32430." evidence="9" ref="4">
    <original>C</original>
    <variation>W</variation>
    <location>
        <position position="951"/>
    </location>
</feature>
<feature type="sequence conflict" description="In Ref. 1; BAF32145 and 4; BAD32430." evidence="9" ref="1 4">
    <original>S</original>
    <variation>L</variation>
    <location>
        <position position="1018"/>
    </location>
</feature>
<feature type="sequence conflict" description="In Ref. 1; BAF32145 and 4; BAD32430." evidence="9" ref="1 4">
    <original>LSQ</original>
    <variation>QAE</variation>
    <location>
        <begin position="1225"/>
        <end position="1227"/>
    </location>
</feature>
<name>DISP3_MOUSE</name>
<gene>
    <name evidence="2" type="primary">Disp3</name>
    <name type="synonym">Kiaa1337</name>
    <name evidence="10" type="synonym">Ptchd2</name>
</gene>